<name>GLYA_ENDTX</name>
<accession>B1GYQ9</accession>
<proteinExistence type="inferred from homology"/>
<reference key="1">
    <citation type="journal article" date="2008" name="Proc. Natl. Acad. Sci. U.S.A.">
        <title>Complete genome of the uncultured termite group 1 bacteria in a single host protist cell.</title>
        <authorList>
            <person name="Hongoh Y."/>
            <person name="Sharma V.K."/>
            <person name="Prakash T."/>
            <person name="Noda S."/>
            <person name="Taylor T.D."/>
            <person name="Kudo T."/>
            <person name="Sakaki Y."/>
            <person name="Toyoda A."/>
            <person name="Hattori M."/>
            <person name="Ohkuma M."/>
        </authorList>
    </citation>
    <scope>NUCLEOTIDE SEQUENCE [LARGE SCALE GENOMIC DNA]</scope>
</reference>
<comment type="function">
    <text evidence="1">Catalyzes the reversible interconversion of serine and glycine with tetrahydrofolate (THF) serving as the one-carbon carrier. This reaction serves as the major source of one-carbon groups required for the biosynthesis of purines, thymidylate, methionine, and other important biomolecules. Also exhibits THF-independent aldolase activity toward beta-hydroxyamino acids, producing glycine and aldehydes, via a retro-aldol mechanism.</text>
</comment>
<comment type="catalytic activity">
    <reaction evidence="1">
        <text>(6R)-5,10-methylene-5,6,7,8-tetrahydrofolate + glycine + H2O = (6S)-5,6,7,8-tetrahydrofolate + L-serine</text>
        <dbReference type="Rhea" id="RHEA:15481"/>
        <dbReference type="ChEBI" id="CHEBI:15377"/>
        <dbReference type="ChEBI" id="CHEBI:15636"/>
        <dbReference type="ChEBI" id="CHEBI:33384"/>
        <dbReference type="ChEBI" id="CHEBI:57305"/>
        <dbReference type="ChEBI" id="CHEBI:57453"/>
        <dbReference type="EC" id="2.1.2.1"/>
    </reaction>
</comment>
<comment type="cofactor">
    <cofactor evidence="1">
        <name>pyridoxal 5'-phosphate</name>
        <dbReference type="ChEBI" id="CHEBI:597326"/>
    </cofactor>
</comment>
<comment type="pathway">
    <text evidence="1">One-carbon metabolism; tetrahydrofolate interconversion.</text>
</comment>
<comment type="pathway">
    <text evidence="1">Amino-acid biosynthesis; glycine biosynthesis; glycine from L-serine: step 1/1.</text>
</comment>
<comment type="subunit">
    <text evidence="1">Homodimer.</text>
</comment>
<comment type="subcellular location">
    <subcellularLocation>
        <location evidence="1">Cytoplasm</location>
    </subcellularLocation>
</comment>
<comment type="similarity">
    <text evidence="1">Belongs to the SHMT family.</text>
</comment>
<evidence type="ECO:0000255" key="1">
    <source>
        <dbReference type="HAMAP-Rule" id="MF_00051"/>
    </source>
</evidence>
<gene>
    <name evidence="1" type="primary">glyA</name>
    <name type="ordered locus">TGRD_669</name>
</gene>
<keyword id="KW-0028">Amino-acid biosynthesis</keyword>
<keyword id="KW-0963">Cytoplasm</keyword>
<keyword id="KW-0554">One-carbon metabolism</keyword>
<keyword id="KW-0663">Pyridoxal phosphate</keyword>
<keyword id="KW-0808">Transferase</keyword>
<protein>
    <recommendedName>
        <fullName evidence="1">Serine hydroxymethyltransferase</fullName>
        <shortName evidence="1">SHMT</shortName>
        <shortName evidence="1">Serine methylase</shortName>
        <ecNumber evidence="1">2.1.2.1</ecNumber>
    </recommendedName>
</protein>
<feature type="chain" id="PRO_1000091593" description="Serine hydroxymethyltransferase">
    <location>
        <begin position="1"/>
        <end position="416"/>
    </location>
</feature>
<feature type="binding site" evidence="1">
    <location>
        <position position="117"/>
    </location>
    <ligand>
        <name>(6S)-5,6,7,8-tetrahydrofolate</name>
        <dbReference type="ChEBI" id="CHEBI:57453"/>
    </ligand>
</feature>
<feature type="binding site" evidence="1">
    <location>
        <begin position="121"/>
        <end position="123"/>
    </location>
    <ligand>
        <name>(6S)-5,6,7,8-tetrahydrofolate</name>
        <dbReference type="ChEBI" id="CHEBI:57453"/>
    </ligand>
</feature>
<feature type="binding site" evidence="1">
    <location>
        <position position="242"/>
    </location>
    <ligand>
        <name>(6S)-5,6,7,8-tetrahydrofolate</name>
        <dbReference type="ChEBI" id="CHEBI:57453"/>
    </ligand>
</feature>
<feature type="site" description="Plays an important role in substrate specificity" evidence="1">
    <location>
        <position position="225"/>
    </location>
</feature>
<feature type="modified residue" description="N6-(pyridoxal phosphate)lysine" evidence="1">
    <location>
        <position position="226"/>
    </location>
</feature>
<organism>
    <name type="scientific">Endomicrobium trichonymphae</name>
    <dbReference type="NCBI Taxonomy" id="1408204"/>
    <lineage>
        <taxon>Bacteria</taxon>
        <taxon>Pseudomonadati</taxon>
        <taxon>Elusimicrobiota</taxon>
        <taxon>Endomicrobiia</taxon>
        <taxon>Endomicrobiales</taxon>
        <taxon>Endomicrobiaceae</taxon>
        <taxon>Candidatus Endomicrobiellum</taxon>
    </lineage>
</organism>
<dbReference type="EC" id="2.1.2.1" evidence="1"/>
<dbReference type="EMBL" id="AP009510">
    <property type="protein sequence ID" value="BAG14152.1"/>
    <property type="molecule type" value="Genomic_DNA"/>
</dbReference>
<dbReference type="RefSeq" id="WP_015423673.1">
    <property type="nucleotide sequence ID" value="NC_020419.1"/>
</dbReference>
<dbReference type="SMR" id="B1GYQ9"/>
<dbReference type="STRING" id="471821.TGRD_669"/>
<dbReference type="KEGG" id="rsd:TGRD_669"/>
<dbReference type="PATRIC" id="fig|471821.5.peg.1143"/>
<dbReference type="HOGENOM" id="CLU_022477_2_1_0"/>
<dbReference type="UniPathway" id="UPA00193"/>
<dbReference type="UniPathway" id="UPA00288">
    <property type="reaction ID" value="UER01023"/>
</dbReference>
<dbReference type="Proteomes" id="UP000001691">
    <property type="component" value="Chromosome"/>
</dbReference>
<dbReference type="GO" id="GO:0005829">
    <property type="term" value="C:cytosol"/>
    <property type="evidence" value="ECO:0007669"/>
    <property type="project" value="TreeGrafter"/>
</dbReference>
<dbReference type="GO" id="GO:0004372">
    <property type="term" value="F:glycine hydroxymethyltransferase activity"/>
    <property type="evidence" value="ECO:0007669"/>
    <property type="project" value="UniProtKB-UniRule"/>
</dbReference>
<dbReference type="GO" id="GO:0030170">
    <property type="term" value="F:pyridoxal phosphate binding"/>
    <property type="evidence" value="ECO:0007669"/>
    <property type="project" value="UniProtKB-UniRule"/>
</dbReference>
<dbReference type="GO" id="GO:0019264">
    <property type="term" value="P:glycine biosynthetic process from serine"/>
    <property type="evidence" value="ECO:0007669"/>
    <property type="project" value="UniProtKB-UniRule"/>
</dbReference>
<dbReference type="GO" id="GO:0035999">
    <property type="term" value="P:tetrahydrofolate interconversion"/>
    <property type="evidence" value="ECO:0007669"/>
    <property type="project" value="UniProtKB-UniRule"/>
</dbReference>
<dbReference type="CDD" id="cd00378">
    <property type="entry name" value="SHMT"/>
    <property type="match status" value="1"/>
</dbReference>
<dbReference type="FunFam" id="3.40.640.10:FF:000001">
    <property type="entry name" value="Serine hydroxymethyltransferase"/>
    <property type="match status" value="1"/>
</dbReference>
<dbReference type="Gene3D" id="3.90.1150.10">
    <property type="entry name" value="Aspartate Aminotransferase, domain 1"/>
    <property type="match status" value="1"/>
</dbReference>
<dbReference type="Gene3D" id="3.40.640.10">
    <property type="entry name" value="Type I PLP-dependent aspartate aminotransferase-like (Major domain)"/>
    <property type="match status" value="1"/>
</dbReference>
<dbReference type="HAMAP" id="MF_00051">
    <property type="entry name" value="SHMT"/>
    <property type="match status" value="1"/>
</dbReference>
<dbReference type="InterPro" id="IPR015424">
    <property type="entry name" value="PyrdxlP-dep_Trfase"/>
</dbReference>
<dbReference type="InterPro" id="IPR015421">
    <property type="entry name" value="PyrdxlP-dep_Trfase_major"/>
</dbReference>
<dbReference type="InterPro" id="IPR015422">
    <property type="entry name" value="PyrdxlP-dep_Trfase_small"/>
</dbReference>
<dbReference type="InterPro" id="IPR001085">
    <property type="entry name" value="Ser_HO-MeTrfase"/>
</dbReference>
<dbReference type="InterPro" id="IPR049943">
    <property type="entry name" value="Ser_HO-MeTrfase-like"/>
</dbReference>
<dbReference type="InterPro" id="IPR019798">
    <property type="entry name" value="Ser_HO-MeTrfase_PLP_BS"/>
</dbReference>
<dbReference type="InterPro" id="IPR039429">
    <property type="entry name" value="SHMT-like_dom"/>
</dbReference>
<dbReference type="NCBIfam" id="NF000586">
    <property type="entry name" value="PRK00011.1"/>
    <property type="match status" value="1"/>
</dbReference>
<dbReference type="PANTHER" id="PTHR11680">
    <property type="entry name" value="SERINE HYDROXYMETHYLTRANSFERASE"/>
    <property type="match status" value="1"/>
</dbReference>
<dbReference type="PANTHER" id="PTHR11680:SF35">
    <property type="entry name" value="SERINE HYDROXYMETHYLTRANSFERASE 1"/>
    <property type="match status" value="1"/>
</dbReference>
<dbReference type="Pfam" id="PF00464">
    <property type="entry name" value="SHMT"/>
    <property type="match status" value="1"/>
</dbReference>
<dbReference type="PIRSF" id="PIRSF000412">
    <property type="entry name" value="SHMT"/>
    <property type="match status" value="1"/>
</dbReference>
<dbReference type="SUPFAM" id="SSF53383">
    <property type="entry name" value="PLP-dependent transferases"/>
    <property type="match status" value="1"/>
</dbReference>
<dbReference type="PROSITE" id="PS00096">
    <property type="entry name" value="SHMT"/>
    <property type="match status" value="1"/>
</dbReference>
<sequence>MENIKKNDIEIHDMLVKELKRQRETIELIASENIASQSVMEAQGSCLTNKYAEGYPGKRYYGGCEVVDIAETIAIERAKKLFNARFANVQPHSGAQANFAILLALLKPGDTIMGLSLSHGGHLTHGSPFNVSGKWFNVISYSVSEKTGCIDYNEIESLVLEHKPKLIISGASAYSRIWDWERISGIAKKVSAYHMSDMAHYAGLVAAGIYPSPVGYADITTTTTHKTLRGPRGGLILTNNEELAKKINSAIFPGEQGGPLMHVIAAKAVAFGEALKPEFKEYQKQVLANAKQLAETLEEGKLKIVSGGTDSHMFLVDLRPLNVKGKNAQDTLEKAGITLNKNGIPYDLEKPTMTSGIRIGSPAVTTRGMKEPEMVKIAEAIIKVLKNIDNEKIISEVSTDMLKLCQEFPIYRGLEY</sequence>